<accession>Q1JQC2</accession>
<feature type="chain" id="PRO_0000257960" description="Immediate early response 3-interacting protein 1">
    <location>
        <begin position="1"/>
        <end position="82"/>
    </location>
</feature>
<feature type="transmembrane region" description="Helical" evidence="3">
    <location>
        <begin position="2"/>
        <end position="22"/>
    </location>
</feature>
<feature type="transmembrane region" description="Helical" evidence="3">
    <location>
        <begin position="62"/>
        <end position="82"/>
    </location>
</feature>
<sequence length="82" mass="8969">MAFTLYSLLQAALLCVNAIAVLHEERFLKNIGWGTDQGIGGFGEEPGIKSQLMNLIRSVRTVMRVPLIIVNSIAIVLLLLFG</sequence>
<comment type="function">
    <text evidence="1 2">Regulator of endoplasmic reticulum secretion that acts as a key determinant of brain size. Required for secretion of extracellular matrix proteins. Required for correct brain development by depositing sufficient extracellular matrix proteins for tissue integrity and the proliferation of neural progenitors (By similarity). Acts as a regulator of the unfolded protein response (UPR) (By similarity).</text>
</comment>
<comment type="subcellular location">
    <subcellularLocation>
        <location evidence="2">Endoplasmic reticulum membrane</location>
        <topology evidence="3">Multi-pass membrane protein</topology>
    </subcellularLocation>
</comment>
<comment type="similarity">
    <text evidence="4">Belongs to the YOS1 family.</text>
</comment>
<evidence type="ECO:0000250" key="1">
    <source>
        <dbReference type="UniProtKB" id="Q9CR20"/>
    </source>
</evidence>
<evidence type="ECO:0000250" key="2">
    <source>
        <dbReference type="UniProtKB" id="Q9Y5U9"/>
    </source>
</evidence>
<evidence type="ECO:0000255" key="3"/>
<evidence type="ECO:0000305" key="4"/>
<evidence type="ECO:0000312" key="5">
    <source>
        <dbReference type="EMBL" id="AAI16065.1"/>
    </source>
</evidence>
<gene>
    <name evidence="2" type="primary">IER3IP1</name>
</gene>
<dbReference type="EMBL" id="BC116064">
    <property type="protein sequence ID" value="AAI16065.1"/>
    <property type="molecule type" value="mRNA"/>
</dbReference>
<dbReference type="RefSeq" id="NP_001106791.1">
    <property type="nucleotide sequence ID" value="NM_001113320.1"/>
</dbReference>
<dbReference type="RefSeq" id="XP_010815266.1">
    <property type="nucleotide sequence ID" value="XM_010816964.2"/>
</dbReference>
<dbReference type="SMR" id="Q1JQC2"/>
<dbReference type="FunCoup" id="Q1JQC2">
    <property type="interactions" value="1817"/>
</dbReference>
<dbReference type="STRING" id="9913.ENSBTAP00000044053"/>
<dbReference type="PaxDb" id="9913-ENSBTAP00000044053"/>
<dbReference type="Ensembl" id="ENSBTAT00000023039.5">
    <property type="protein sequence ID" value="ENSBTAP00000051699.3"/>
    <property type="gene ID" value="ENSBTAG00000017330.5"/>
</dbReference>
<dbReference type="GeneID" id="768079"/>
<dbReference type="KEGG" id="bta:101906131"/>
<dbReference type="KEGG" id="bta:768079"/>
<dbReference type="CTD" id="51124"/>
<dbReference type="VEuPathDB" id="HostDB:ENSBTAG00000032961"/>
<dbReference type="eggNOG" id="KOG4779">
    <property type="taxonomic scope" value="Eukaryota"/>
</dbReference>
<dbReference type="GeneTree" id="ENSGT00510000047648"/>
<dbReference type="HOGENOM" id="CLU_152125_3_0_1"/>
<dbReference type="InParanoid" id="Q1JQC2"/>
<dbReference type="OMA" id="VQTVMRM"/>
<dbReference type="OrthoDB" id="15356at2759"/>
<dbReference type="TreeFam" id="TF300263"/>
<dbReference type="Proteomes" id="UP000009136">
    <property type="component" value="Chromosome 11"/>
</dbReference>
<dbReference type="Bgee" id="ENSBTAG00000032961">
    <property type="expression patterns" value="Expressed in granulosa cell and 107 other cell types or tissues"/>
</dbReference>
<dbReference type="GO" id="GO:0030134">
    <property type="term" value="C:COPII-coated ER to Golgi transport vesicle"/>
    <property type="evidence" value="ECO:0000318"/>
    <property type="project" value="GO_Central"/>
</dbReference>
<dbReference type="GO" id="GO:0005789">
    <property type="term" value="C:endoplasmic reticulum membrane"/>
    <property type="evidence" value="ECO:0000250"/>
    <property type="project" value="UniProtKB"/>
</dbReference>
<dbReference type="GO" id="GO:0000139">
    <property type="term" value="C:Golgi membrane"/>
    <property type="evidence" value="ECO:0000318"/>
    <property type="project" value="GO_Central"/>
</dbReference>
<dbReference type="GO" id="GO:0007420">
    <property type="term" value="P:brain development"/>
    <property type="evidence" value="ECO:0000250"/>
    <property type="project" value="UniProtKB"/>
</dbReference>
<dbReference type="GO" id="GO:0006888">
    <property type="term" value="P:endoplasmic reticulum to Golgi vesicle-mediated transport"/>
    <property type="evidence" value="ECO:0000318"/>
    <property type="project" value="GO_Central"/>
</dbReference>
<dbReference type="GO" id="GO:0035265">
    <property type="term" value="P:organ growth"/>
    <property type="evidence" value="ECO:0000250"/>
    <property type="project" value="UniProtKB"/>
</dbReference>
<dbReference type="GO" id="GO:0003331">
    <property type="term" value="P:positive regulation of extracellular matrix constituent secretion"/>
    <property type="evidence" value="ECO:0000250"/>
    <property type="project" value="UniProtKB"/>
</dbReference>
<dbReference type="GO" id="GO:0050714">
    <property type="term" value="P:positive regulation of protein secretion"/>
    <property type="evidence" value="ECO:0000250"/>
    <property type="project" value="UniProtKB"/>
</dbReference>
<dbReference type="GO" id="GO:0015031">
    <property type="term" value="P:protein transport"/>
    <property type="evidence" value="ECO:0007669"/>
    <property type="project" value="UniProtKB-KW"/>
</dbReference>
<dbReference type="GO" id="GO:2000269">
    <property type="term" value="P:regulation of fibroblast apoptotic process"/>
    <property type="evidence" value="ECO:0000250"/>
    <property type="project" value="UniProtKB"/>
</dbReference>
<dbReference type="InterPro" id="IPR013880">
    <property type="entry name" value="Yos1"/>
</dbReference>
<dbReference type="PANTHER" id="PTHR15858">
    <property type="entry name" value="IMMEDIATE EARLY RESPONSE 3-INTERACTING PROTEIN 1"/>
    <property type="match status" value="1"/>
</dbReference>
<dbReference type="PANTHER" id="PTHR15858:SF0">
    <property type="entry name" value="IMMEDIATE EARLY RESPONSE 3-INTERACTING PROTEIN 1"/>
    <property type="match status" value="1"/>
</dbReference>
<dbReference type="Pfam" id="PF08571">
    <property type="entry name" value="Yos1"/>
    <property type="match status" value="1"/>
</dbReference>
<protein>
    <recommendedName>
        <fullName evidence="4">Immediate early response 3-interacting protein 1</fullName>
    </recommendedName>
</protein>
<name>IR3IP_BOVIN</name>
<proteinExistence type="inferred from homology"/>
<reference key="1">
    <citation type="submission" date="2006-05" db="EMBL/GenBank/DDBJ databases">
        <authorList>
            <consortium name="NIH - Mammalian Gene Collection (MGC) project"/>
        </authorList>
    </citation>
    <scope>NUCLEOTIDE SEQUENCE [LARGE SCALE MRNA]</scope>
    <source>
        <strain evidence="5">Hereford</strain>
        <tissue evidence="5">Ascending colon</tissue>
    </source>
</reference>
<keyword id="KW-0256">Endoplasmic reticulum</keyword>
<keyword id="KW-0472">Membrane</keyword>
<keyword id="KW-0653">Protein transport</keyword>
<keyword id="KW-1185">Reference proteome</keyword>
<keyword id="KW-0812">Transmembrane</keyword>
<keyword id="KW-1133">Transmembrane helix</keyword>
<keyword id="KW-0813">Transport</keyword>
<organism>
    <name type="scientific">Bos taurus</name>
    <name type="common">Bovine</name>
    <dbReference type="NCBI Taxonomy" id="9913"/>
    <lineage>
        <taxon>Eukaryota</taxon>
        <taxon>Metazoa</taxon>
        <taxon>Chordata</taxon>
        <taxon>Craniata</taxon>
        <taxon>Vertebrata</taxon>
        <taxon>Euteleostomi</taxon>
        <taxon>Mammalia</taxon>
        <taxon>Eutheria</taxon>
        <taxon>Laurasiatheria</taxon>
        <taxon>Artiodactyla</taxon>
        <taxon>Ruminantia</taxon>
        <taxon>Pecora</taxon>
        <taxon>Bovidae</taxon>
        <taxon>Bovinae</taxon>
        <taxon>Bos</taxon>
    </lineage>
</organism>